<comment type="function">
    <text evidence="3">Effector proteins function to alter host cell physiology and promote bacterial survival in host tissues. This protein is an E3 ubiquitin ligase that interferes with host's ubiquitination pathway. Can ubiquitinate both ubiquitin and host TXN (thioredoxin). Leads to significant decrease of thioredoxin activity and increase of host cell death.</text>
</comment>
<comment type="catalytic activity">
    <reaction>
        <text>S-ubiquitinyl-[E2 ubiquitin-conjugating enzyme]-L-cysteine + [acceptor protein]-L-lysine = [E2 ubiquitin-conjugating enzyme]-L-cysteine + N(6)-ubiquitinyl-[acceptor protein]-L-lysine.</text>
        <dbReference type="EC" id="2.3.2.27"/>
    </reaction>
</comment>
<comment type="activity regulation">
    <text evidence="3">Binding to TXN is inhibited by hydrogen peroxide in vitro.</text>
</comment>
<comment type="subunit">
    <text evidence="3">Interacts with host TXN.</text>
</comment>
<comment type="interaction">
    <interactant intactId="EBI-10712653">
        <id>Q8ZQQ2</id>
    </interactant>
    <interactant intactId="EBI-713113">
        <id>Q9UBS4</id>
        <label>DNAJB11</label>
    </interactant>
    <organismsDiffer>true</organismsDiffer>
    <experiments>4</experiments>
</comment>
<comment type="subcellular location">
    <subcellularLocation>
        <location evidence="1">Secreted</location>
    </subcellularLocation>
    <subcellularLocation>
        <location evidence="1">Host cytoplasm</location>
    </subcellularLocation>
    <text evidence="1">Secreted via type III secretion systems 1 and 2 (SPI-1 and SPI-2 T3SS), and delivered into the host cytoplasm.</text>
</comment>
<comment type="domain">
    <text evidence="1">The LRR (leucine-rich repeat) domain forms a slightly curved solenoid and may mediate interaction with target proteins.</text>
</comment>
<comment type="PTM">
    <text evidence="1">Ubiquitinated in the presence of host E1 ubiquitin-activating enzyme, E2 ubiquitin-conjugating enzyme and ubiquitin.</text>
</comment>
<comment type="similarity">
    <text evidence="2 4">Belongs to the LRR-containing bacterial E3 ligase family.</text>
</comment>
<keyword id="KW-1035">Host cytoplasm</keyword>
<keyword id="KW-0433">Leucine-rich repeat</keyword>
<keyword id="KW-1185">Reference proteome</keyword>
<keyword id="KW-0677">Repeat</keyword>
<keyword id="KW-0964">Secreted</keyword>
<keyword id="KW-0808">Transferase</keyword>
<keyword id="KW-0832">Ubl conjugation</keyword>
<keyword id="KW-0833">Ubl conjugation pathway</keyword>
<keyword id="KW-0843">Virulence</keyword>
<accession>Q8ZQQ2</accession>
<accession>Q9XCV2</accession>
<reference key="1">
    <citation type="journal article" date="1999" name="Infect. Immun.">
        <title>Identification of a putative Salmonella enterica serotype typhimurium host range factor with homology to IpaH and YopM by signature-tagged mutagenesis.</title>
        <authorList>
            <person name="Tsolis R.M."/>
            <person name="Townsend S.M."/>
            <person name="Miao E.A."/>
            <person name="Miller S.I."/>
            <person name="Ficht T.A."/>
            <person name="Adams L.G."/>
            <person name="Baumler A.J."/>
        </authorList>
    </citation>
    <scope>NUCLEOTIDE SEQUENCE [GENOMIC DNA]</scope>
    <source>
        <strain>ATCC 14028 / SGSC 2980 / CDC 6516-60 / NCTC 12023</strain>
    </source>
</reference>
<reference key="2">
    <citation type="journal article" date="2001" name="Nature">
        <title>Complete genome sequence of Salmonella enterica serovar Typhimurium LT2.</title>
        <authorList>
            <person name="McClelland M."/>
            <person name="Sanderson K.E."/>
            <person name="Spieth J."/>
            <person name="Clifton S.W."/>
            <person name="Latreille P."/>
            <person name="Courtney L."/>
            <person name="Porwollik S."/>
            <person name="Ali J."/>
            <person name="Dante M."/>
            <person name="Du F."/>
            <person name="Hou S."/>
            <person name="Layman D."/>
            <person name="Leonard S."/>
            <person name="Nguyen C."/>
            <person name="Scott K."/>
            <person name="Holmes A."/>
            <person name="Grewal N."/>
            <person name="Mulvaney E."/>
            <person name="Ryan E."/>
            <person name="Sun H."/>
            <person name="Florea L."/>
            <person name="Miller W."/>
            <person name="Stoneking T."/>
            <person name="Nhan M."/>
            <person name="Waterston R."/>
            <person name="Wilson R.K."/>
        </authorList>
    </citation>
    <scope>NUCLEOTIDE SEQUENCE [LARGE SCALE GENOMIC DNA]</scope>
    <source>
        <strain>LT2 / SGSC1412 / ATCC 700720</strain>
    </source>
</reference>
<reference key="3">
    <citation type="journal article" date="2009" name="J. Biol. Chem.">
        <title>Salmonella type III secretion effector SlrP is an E3 ubiquitin ligase for mammalian thioredoxin.</title>
        <authorList>
            <person name="Bernal-Bayard J."/>
            <person name="Ramos-Morales F."/>
        </authorList>
    </citation>
    <scope>FUNCTION AS AN UBIQUITIN LIGASE</scope>
    <scope>ACTIVITY REGULATION</scope>
    <scope>INTERACTION WITH HOST TXN</scope>
    <scope>MUTAGENESIS OF CYS-546</scope>
    <source>
        <strain>ATCC 14028 / SGSC 2980 / CDC 6516-60 / NCTC 12023</strain>
    </source>
</reference>
<name>SLRP_SALTY</name>
<protein>
    <recommendedName>
        <fullName>E3 ubiquitin-protein ligase SlrP</fullName>
        <ecNumber>2.3.2.27</ecNumber>
    </recommendedName>
    <alternativeName>
        <fullName evidence="4">RING-type E3 ubiquitin transferase SlrP</fullName>
    </alternativeName>
    <alternativeName>
        <fullName>Secreted effector protein SlrP</fullName>
    </alternativeName>
</protein>
<organism>
    <name type="scientific">Salmonella typhimurium (strain LT2 / SGSC1412 / ATCC 700720)</name>
    <dbReference type="NCBI Taxonomy" id="99287"/>
    <lineage>
        <taxon>Bacteria</taxon>
        <taxon>Pseudomonadati</taxon>
        <taxon>Pseudomonadota</taxon>
        <taxon>Gammaproteobacteria</taxon>
        <taxon>Enterobacterales</taxon>
        <taxon>Enterobacteriaceae</taxon>
        <taxon>Salmonella</taxon>
    </lineage>
</organism>
<evidence type="ECO:0000250" key="1"/>
<evidence type="ECO:0000255" key="2">
    <source>
        <dbReference type="PROSITE-ProRule" id="PRU01398"/>
    </source>
</evidence>
<evidence type="ECO:0000269" key="3">
    <source>
    </source>
</evidence>
<evidence type="ECO:0000305" key="4"/>
<proteinExistence type="evidence at protein level"/>
<feature type="chain" id="PRO_0000391755" description="E3 ubiquitin-protein ligase SlrP">
    <location>
        <begin position="1"/>
        <end position="765"/>
    </location>
</feature>
<feature type="repeat" description="LRR 1">
    <location>
        <begin position="200"/>
        <end position="219"/>
    </location>
</feature>
<feature type="repeat" description="LRR 2">
    <location>
        <begin position="221"/>
        <end position="242"/>
    </location>
</feature>
<feature type="repeat" description="LRR 3">
    <location>
        <begin position="243"/>
        <end position="262"/>
    </location>
</feature>
<feature type="repeat" description="LRR 4">
    <location>
        <begin position="263"/>
        <end position="284"/>
    </location>
</feature>
<feature type="repeat" description="LRR 5">
    <location>
        <begin position="285"/>
        <end position="305"/>
    </location>
</feature>
<feature type="repeat" description="LRR 6">
    <location>
        <begin position="306"/>
        <end position="325"/>
    </location>
</feature>
<feature type="repeat" description="LRR 7">
    <location>
        <begin position="326"/>
        <end position="346"/>
    </location>
</feature>
<feature type="repeat" description="LRR 8">
    <location>
        <begin position="347"/>
        <end position="368"/>
    </location>
</feature>
<feature type="repeat" description="LRR 9">
    <location>
        <begin position="369"/>
        <end position="389"/>
    </location>
</feature>
<feature type="repeat" description="LRR 10">
    <location>
        <begin position="390"/>
        <end position="410"/>
    </location>
</feature>
<feature type="domain" description="NEL" evidence="2">
    <location>
        <begin position="464"/>
        <end position="758"/>
    </location>
</feature>
<feature type="region of interest" description="Interaction with target proteins" evidence="1">
    <location>
        <begin position="1"/>
        <end position="451"/>
    </location>
</feature>
<feature type="region of interest" description="Linker" evidence="1">
    <location>
        <begin position="452"/>
        <end position="461"/>
    </location>
</feature>
<feature type="region of interest" description="E3 ubiquitin-protein ligase catalytic domain" evidence="1">
    <location>
        <begin position="462"/>
        <end position="765"/>
    </location>
</feature>
<feature type="active site" description="Glycyl thioester intermediate" evidence="2">
    <location>
        <position position="546"/>
    </location>
</feature>
<feature type="mutagenesis site" description="Loss of ubiquitin ligase activity." evidence="3">
    <original>C</original>
    <variation>A</variation>
    <location>
        <position position="546"/>
    </location>
</feature>
<feature type="sequence conflict" description="In Ref. 1; AAD39928." evidence="4" ref="1">
    <original>A</original>
    <variation>P</variation>
    <location>
        <position position="168"/>
    </location>
</feature>
<feature type="sequence conflict" description="In Ref. 1; AAD39928." evidence="4" ref="1">
    <original>G</original>
    <variation>E</variation>
    <location>
        <position position="305"/>
    </location>
</feature>
<feature type="sequence conflict" description="In Ref. 1; AAD39928." evidence="4" ref="1">
    <original>F</original>
    <variation>V</variation>
    <location>
        <position position="451"/>
    </location>
</feature>
<sequence>MFNITNIQSTARHQSISNEASTEVPLKEEIWNKISAFFSSEHQVEAQNCIAYLCHPPETASPEEIKSKFECLRMLAFPAYADNIQYSRGGADQYCILSENSQEILSIVFNTEGYTVEGGGKSVTYTRVTESEQASSASGSKDAVNYELIWSEWVKEAPAKEAANREEAVQRMRDCLKNNKTELRLKILGLTTIPAYIPEQITTLILDNNELKSLPENLQGNIKTLYANSNQLTSIPATLPDTIQEMELSINRITELPERLPSALQSLDLFHNKISCLPENLPEELRYLSVYDNSIRTLPAHLPSGITHLNVQSNSLTALPETLPPGLKTLEAGENALTSLPASLPPELQVLDVSKNQITVLPETLPPTITTLDVSRNALTNLPENLPAALQIMQASRNNLVRLPESLPHFRGEGPQPTRIIVEYNPFSERTIQNMQRLMSSVDYQGPRVLFAMGDFSIVRVTRPLHQAVQGWLTSLEEEDVNQWRAFEAEANAAAFSGFLDYLGDTQNTRHPDFKEQVSAWLMRLAEDSALRETVFIIAMNATISCEDRVTLAYHQMQEATLVHDAERGAFDSHLAELIMAGREIFRLEQIESLAREKVKRLFFIDEVEVFLGFQNQLRESLSLTTMTRDMRFYNVSGITESDLDEAEIRIKMAENRDFHKWFALWGPWHKVLERIAPEEWREMMAKRDECIETDEYQSRVNAELEDLRIADDSDAERTTEVQMDAERAIGIKIMEEINQTLFTEIMENILLKKEVSSLMSAYWR</sequence>
<gene>
    <name type="primary">slrP</name>
    <name type="ordered locus">STM0800</name>
</gene>
<dbReference type="EC" id="2.3.2.27"/>
<dbReference type="EMBL" id="AF127079">
    <property type="protein sequence ID" value="AAD39928.1"/>
    <property type="molecule type" value="Genomic_DNA"/>
</dbReference>
<dbReference type="EMBL" id="AE006468">
    <property type="protein sequence ID" value="AAL19737.1"/>
    <property type="molecule type" value="Genomic_DNA"/>
</dbReference>
<dbReference type="RefSeq" id="NP_459778.1">
    <property type="nucleotide sequence ID" value="NC_003197.2"/>
</dbReference>
<dbReference type="RefSeq" id="WP_000482001.1">
    <property type="nucleotide sequence ID" value="NC_003197.2"/>
</dbReference>
<dbReference type="SMR" id="Q8ZQQ2"/>
<dbReference type="IntAct" id="Q8ZQQ2">
    <property type="interactions" value="1"/>
</dbReference>
<dbReference type="STRING" id="99287.STM0800"/>
<dbReference type="PaxDb" id="99287-STM0800"/>
<dbReference type="GeneID" id="1252320"/>
<dbReference type="KEGG" id="stm:STM0800"/>
<dbReference type="PATRIC" id="fig|99287.12.peg.834"/>
<dbReference type="HOGENOM" id="CLU_018533_1_0_6"/>
<dbReference type="PhylomeDB" id="Q8ZQQ2"/>
<dbReference type="BioCyc" id="SENT99287:STM0800-MONOMER"/>
<dbReference type="Proteomes" id="UP000001014">
    <property type="component" value="Chromosome"/>
</dbReference>
<dbReference type="GO" id="GO:0005576">
    <property type="term" value="C:extracellular region"/>
    <property type="evidence" value="ECO:0007669"/>
    <property type="project" value="UniProtKB-SubCell"/>
</dbReference>
<dbReference type="GO" id="GO:0030430">
    <property type="term" value="C:host cell cytoplasm"/>
    <property type="evidence" value="ECO:0000314"/>
    <property type="project" value="AgBase"/>
</dbReference>
<dbReference type="GO" id="GO:0044165">
    <property type="term" value="C:host cell endoplasmic reticulum"/>
    <property type="evidence" value="ECO:0000314"/>
    <property type="project" value="AgBase"/>
</dbReference>
<dbReference type="GO" id="GO:0004842">
    <property type="term" value="F:ubiquitin-protein transferase activity"/>
    <property type="evidence" value="ECO:0000314"/>
    <property type="project" value="UniProtKB"/>
</dbReference>
<dbReference type="GO" id="GO:0051082">
    <property type="term" value="F:unfolded protein binding"/>
    <property type="evidence" value="ECO:0000353"/>
    <property type="project" value="AgBase"/>
</dbReference>
<dbReference type="GO" id="GO:0032091">
    <property type="term" value="P:negative regulation of protein binding"/>
    <property type="evidence" value="ECO:0000314"/>
    <property type="project" value="AgBase"/>
</dbReference>
<dbReference type="GO" id="GO:0030254">
    <property type="term" value="P:protein secretion by the type III secretion system"/>
    <property type="evidence" value="ECO:0000250"/>
    <property type="project" value="UniProtKB"/>
</dbReference>
<dbReference type="GO" id="GO:0016567">
    <property type="term" value="P:protein ubiquitination"/>
    <property type="evidence" value="ECO:0000314"/>
    <property type="project" value="UniProtKB"/>
</dbReference>
<dbReference type="FunFam" id="1.20.58.360:FF:000001">
    <property type="entry name" value="Probable E3 ubiquitin-protein ligase ipaH7.8"/>
    <property type="match status" value="1"/>
</dbReference>
<dbReference type="FunFam" id="1.20.1270.130:FF:000003">
    <property type="entry name" value="Type III secretion system effector E3 ubiquitin transferase SlrP"/>
    <property type="match status" value="1"/>
</dbReference>
<dbReference type="Gene3D" id="1.20.58.90">
    <property type="match status" value="1"/>
</dbReference>
<dbReference type="Gene3D" id="3.80.10.10">
    <property type="entry name" value="Ribonuclease Inhibitor"/>
    <property type="match status" value="1"/>
</dbReference>
<dbReference type="Gene3D" id="3.30.2440.10">
    <property type="entry name" value="Secreted effector protein SifA"/>
    <property type="match status" value="1"/>
</dbReference>
<dbReference type="Gene3D" id="1.20.58.360">
    <property type="entry name" value="Shigella T3SS effector IpaH defines"/>
    <property type="match status" value="1"/>
</dbReference>
<dbReference type="Gene3D" id="1.20.1270.130">
    <property type="entry name" value="Shigella T3SS effector IpaH domain"/>
    <property type="match status" value="1"/>
</dbReference>
<dbReference type="InterPro" id="IPR001611">
    <property type="entry name" value="Leu-rich_rpt"/>
</dbReference>
<dbReference type="InterPro" id="IPR003591">
    <property type="entry name" value="Leu-rich_rpt_typical-subtyp"/>
</dbReference>
<dbReference type="InterPro" id="IPR051071">
    <property type="entry name" value="LRR-bact_E3_ubiq_ligases"/>
</dbReference>
<dbReference type="InterPro" id="IPR032675">
    <property type="entry name" value="LRR_dom_sf"/>
</dbReference>
<dbReference type="InterPro" id="IPR032674">
    <property type="entry name" value="LRR_E3_ligase_N"/>
</dbReference>
<dbReference type="InterPro" id="IPR029487">
    <property type="entry name" value="NEL_dom"/>
</dbReference>
<dbReference type="NCBIfam" id="NF011897">
    <property type="entry name" value="PRK15370.1"/>
    <property type="match status" value="1"/>
</dbReference>
<dbReference type="PANTHER" id="PTHR47114">
    <property type="match status" value="1"/>
</dbReference>
<dbReference type="PANTHER" id="PTHR47114:SF2">
    <property type="entry name" value="OLIGODENDROCYTE-MYELIN GLYCOPROTEIN"/>
    <property type="match status" value="1"/>
</dbReference>
<dbReference type="Pfam" id="PF12468">
    <property type="entry name" value="LRR_TTSS"/>
    <property type="match status" value="1"/>
</dbReference>
<dbReference type="Pfam" id="PF14496">
    <property type="entry name" value="NEL"/>
    <property type="match status" value="1"/>
</dbReference>
<dbReference type="SMART" id="SM00364">
    <property type="entry name" value="LRR_BAC"/>
    <property type="match status" value="10"/>
</dbReference>
<dbReference type="SMART" id="SM00369">
    <property type="entry name" value="LRR_TYP"/>
    <property type="match status" value="6"/>
</dbReference>
<dbReference type="SUPFAM" id="SSF52058">
    <property type="entry name" value="L domain-like"/>
    <property type="match status" value="1"/>
</dbReference>
<dbReference type="PROSITE" id="PS51450">
    <property type="entry name" value="LRR"/>
    <property type="match status" value="9"/>
</dbReference>
<dbReference type="PROSITE" id="PS52053">
    <property type="entry name" value="NEL"/>
    <property type="match status" value="1"/>
</dbReference>